<sequence>MSARRSANFVNTSVTTHELVEFEVPAGIAIGQAMRELNLPNKGDDAIVCAKDTEGQLKDLSHVPEETATFTAVPANSEDGRAVIRHSCAHVLAQAVQAEFPGTKLGIGPAIENGFYYDFDVAEPFTPEDLKTIEKRMKKIIKTGQKFERRVYESTEAAAAELADEPYKLELIQDKGNVDPDSDEATEVGAGELTAYDNVNPRTNEVEWSDLCRGPHIPTTRYIPAFALTRSSAAYWRGDQTNAGLQRIYGTAWESKEKLDEYQTMLAEAEKRDHRRLGTELDLFSFPDEIGSGLPVFHPNGAIVRLEMEEHSRRRHIQAGYSFVNTPHATKSDLFEKSGHLGFYKEGMFPPLQLDAEYDAEGNQTKPGQDYYLKPMNCPMHNLIFDSRGRSYRELPLRLFEFGTVYRYEKSGVVHGLTRARGFTQDDAHIYCTEDQLEEELTSVLEFIISLLKDYGLDDFYLELSTKDPKKFVGDDEIWERSTEILQRVATNSGLDLVPDPEGAAFYGPKISVQAKDAIGRTWQMSTVQLDFNLPERFELEYTSPDGSKQRPIMIHRALFGSIERFFGVLLEHYAGAFPAWLAPHQVVGIPVAEDFIPHLEKVVDKLRARGFRAEVDTSDDRMQKKIRTHTTGKIPFMLLAGGRDVEADAVSFRFLDGTQVNGVPVDEAVELISTWILERNNTQPSEETIAALR</sequence>
<protein>
    <recommendedName>
        <fullName evidence="1">Threonine--tRNA ligase</fullName>
        <ecNumber evidence="1">6.1.1.3</ecNumber>
    </recommendedName>
    <alternativeName>
        <fullName evidence="1">Threonyl-tRNA synthetase</fullName>
        <shortName evidence="1">ThrRS</shortName>
    </alternativeName>
</protein>
<comment type="function">
    <text evidence="1">Catalyzes the attachment of threonine to tRNA(Thr) in a two-step reaction: L-threonine is first activated by ATP to form Thr-AMP and then transferred to the acceptor end of tRNA(Thr). Also edits incorrectly charged L-seryl-tRNA(Thr).</text>
</comment>
<comment type="catalytic activity">
    <reaction evidence="1">
        <text>tRNA(Thr) + L-threonine + ATP = L-threonyl-tRNA(Thr) + AMP + diphosphate + H(+)</text>
        <dbReference type="Rhea" id="RHEA:24624"/>
        <dbReference type="Rhea" id="RHEA-COMP:9670"/>
        <dbReference type="Rhea" id="RHEA-COMP:9704"/>
        <dbReference type="ChEBI" id="CHEBI:15378"/>
        <dbReference type="ChEBI" id="CHEBI:30616"/>
        <dbReference type="ChEBI" id="CHEBI:33019"/>
        <dbReference type="ChEBI" id="CHEBI:57926"/>
        <dbReference type="ChEBI" id="CHEBI:78442"/>
        <dbReference type="ChEBI" id="CHEBI:78534"/>
        <dbReference type="ChEBI" id="CHEBI:456215"/>
        <dbReference type="EC" id="6.1.1.3"/>
    </reaction>
</comment>
<comment type="cofactor">
    <cofactor evidence="1">
        <name>Zn(2+)</name>
        <dbReference type="ChEBI" id="CHEBI:29105"/>
    </cofactor>
    <text evidence="1">Binds 1 zinc ion per subunit.</text>
</comment>
<comment type="subunit">
    <text evidence="1">Homodimer.</text>
</comment>
<comment type="subcellular location">
    <subcellularLocation>
        <location evidence="1">Cytoplasm</location>
    </subcellularLocation>
</comment>
<comment type="similarity">
    <text evidence="1">Belongs to the class-II aminoacyl-tRNA synthetase family.</text>
</comment>
<comment type="sequence caution" evidence="3">
    <conflict type="erroneous initiation">
        <sequence resource="EMBL-CDS" id="BAC18595"/>
    </conflict>
    <text>Extended N-terminus.</text>
</comment>
<reference key="1">
    <citation type="journal article" date="2003" name="Genome Res.">
        <title>Comparative complete genome sequence analysis of the amino acid replacements responsible for the thermostability of Corynebacterium efficiens.</title>
        <authorList>
            <person name="Nishio Y."/>
            <person name="Nakamura Y."/>
            <person name="Kawarabayasi Y."/>
            <person name="Usuda Y."/>
            <person name="Kimura E."/>
            <person name="Sugimoto S."/>
            <person name="Matsui K."/>
            <person name="Yamagishi A."/>
            <person name="Kikuchi H."/>
            <person name="Ikeo K."/>
            <person name="Gojobori T."/>
        </authorList>
    </citation>
    <scope>NUCLEOTIDE SEQUENCE [LARGE SCALE GENOMIC DNA]</scope>
    <source>
        <strain>DSM 44549 / YS-314 / AJ 12310 / JCM 11189 / NBRC 100395</strain>
    </source>
</reference>
<gene>
    <name evidence="1" type="primary">thrS</name>
    <name type="ordered locus">CE1785</name>
</gene>
<feature type="chain" id="PRO_0000100969" description="Threonine--tRNA ligase">
    <location>
        <begin position="1"/>
        <end position="694"/>
    </location>
</feature>
<feature type="domain" description="TGS" evidence="2">
    <location>
        <begin position="8"/>
        <end position="74"/>
    </location>
</feature>
<feature type="region of interest" description="Catalytic" evidence="1">
    <location>
        <begin position="273"/>
        <end position="579"/>
    </location>
</feature>
<feature type="binding site" evidence="1">
    <location>
        <position position="378"/>
    </location>
    <ligand>
        <name>Zn(2+)</name>
        <dbReference type="ChEBI" id="CHEBI:29105"/>
    </ligand>
</feature>
<feature type="binding site" evidence="1">
    <location>
        <position position="429"/>
    </location>
    <ligand>
        <name>Zn(2+)</name>
        <dbReference type="ChEBI" id="CHEBI:29105"/>
    </ligand>
</feature>
<feature type="binding site" evidence="1">
    <location>
        <position position="556"/>
    </location>
    <ligand>
        <name>Zn(2+)</name>
        <dbReference type="ChEBI" id="CHEBI:29105"/>
    </ligand>
</feature>
<keyword id="KW-0030">Aminoacyl-tRNA synthetase</keyword>
<keyword id="KW-0067">ATP-binding</keyword>
<keyword id="KW-0963">Cytoplasm</keyword>
<keyword id="KW-0436">Ligase</keyword>
<keyword id="KW-0479">Metal-binding</keyword>
<keyword id="KW-0547">Nucleotide-binding</keyword>
<keyword id="KW-0648">Protein biosynthesis</keyword>
<keyword id="KW-1185">Reference proteome</keyword>
<keyword id="KW-0694">RNA-binding</keyword>
<keyword id="KW-0820">tRNA-binding</keyword>
<keyword id="KW-0862">Zinc</keyword>
<proteinExistence type="inferred from homology"/>
<evidence type="ECO:0000255" key="1">
    <source>
        <dbReference type="HAMAP-Rule" id="MF_00184"/>
    </source>
</evidence>
<evidence type="ECO:0000255" key="2">
    <source>
        <dbReference type="PROSITE-ProRule" id="PRU01228"/>
    </source>
</evidence>
<evidence type="ECO:0000305" key="3"/>
<dbReference type="EC" id="6.1.1.3" evidence="1"/>
<dbReference type="EMBL" id="BA000035">
    <property type="protein sequence ID" value="BAC18595.1"/>
    <property type="status" value="ALT_INIT"/>
    <property type="molecule type" value="Genomic_DNA"/>
</dbReference>
<dbReference type="RefSeq" id="WP_081447222.1">
    <property type="nucleotide sequence ID" value="NC_004369.1"/>
</dbReference>
<dbReference type="SMR" id="Q8FPJ3"/>
<dbReference type="STRING" id="196164.gene:10742206"/>
<dbReference type="KEGG" id="cef:CE1785"/>
<dbReference type="eggNOG" id="COG0441">
    <property type="taxonomic scope" value="Bacteria"/>
</dbReference>
<dbReference type="HOGENOM" id="CLU_008554_0_1_11"/>
<dbReference type="Proteomes" id="UP000001409">
    <property type="component" value="Chromosome"/>
</dbReference>
<dbReference type="GO" id="GO:0005737">
    <property type="term" value="C:cytoplasm"/>
    <property type="evidence" value="ECO:0007669"/>
    <property type="project" value="UniProtKB-SubCell"/>
</dbReference>
<dbReference type="GO" id="GO:0005524">
    <property type="term" value="F:ATP binding"/>
    <property type="evidence" value="ECO:0007669"/>
    <property type="project" value="UniProtKB-UniRule"/>
</dbReference>
<dbReference type="GO" id="GO:0046872">
    <property type="term" value="F:metal ion binding"/>
    <property type="evidence" value="ECO:0007669"/>
    <property type="project" value="UniProtKB-KW"/>
</dbReference>
<dbReference type="GO" id="GO:0004829">
    <property type="term" value="F:threonine-tRNA ligase activity"/>
    <property type="evidence" value="ECO:0007669"/>
    <property type="project" value="UniProtKB-UniRule"/>
</dbReference>
<dbReference type="GO" id="GO:0000049">
    <property type="term" value="F:tRNA binding"/>
    <property type="evidence" value="ECO:0007669"/>
    <property type="project" value="UniProtKB-KW"/>
</dbReference>
<dbReference type="GO" id="GO:0006435">
    <property type="term" value="P:threonyl-tRNA aminoacylation"/>
    <property type="evidence" value="ECO:0007669"/>
    <property type="project" value="UniProtKB-UniRule"/>
</dbReference>
<dbReference type="CDD" id="cd00860">
    <property type="entry name" value="ThrRS_anticodon"/>
    <property type="match status" value="1"/>
</dbReference>
<dbReference type="CDD" id="cd00771">
    <property type="entry name" value="ThrRS_core"/>
    <property type="match status" value="1"/>
</dbReference>
<dbReference type="FunFam" id="3.30.54.20:FF:000003">
    <property type="entry name" value="Threonine--tRNA ligase"/>
    <property type="match status" value="1"/>
</dbReference>
<dbReference type="FunFam" id="3.30.930.10:FF:000019">
    <property type="entry name" value="Threonine--tRNA ligase"/>
    <property type="match status" value="1"/>
</dbReference>
<dbReference type="FunFam" id="3.40.50.800:FF:000001">
    <property type="entry name" value="Threonine--tRNA ligase"/>
    <property type="match status" value="1"/>
</dbReference>
<dbReference type="FunFam" id="3.30.980.10:FF:000005">
    <property type="entry name" value="Threonyl-tRNA synthetase, mitochondrial"/>
    <property type="match status" value="1"/>
</dbReference>
<dbReference type="Gene3D" id="3.30.54.20">
    <property type="match status" value="1"/>
</dbReference>
<dbReference type="Gene3D" id="3.40.50.800">
    <property type="entry name" value="Anticodon-binding domain"/>
    <property type="match status" value="1"/>
</dbReference>
<dbReference type="Gene3D" id="3.30.930.10">
    <property type="entry name" value="Bira Bifunctional Protein, Domain 2"/>
    <property type="match status" value="1"/>
</dbReference>
<dbReference type="Gene3D" id="3.30.980.10">
    <property type="entry name" value="Threonyl-trna Synthetase, Chain A, domain 2"/>
    <property type="match status" value="1"/>
</dbReference>
<dbReference type="HAMAP" id="MF_00184">
    <property type="entry name" value="Thr_tRNA_synth"/>
    <property type="match status" value="1"/>
</dbReference>
<dbReference type="InterPro" id="IPR002314">
    <property type="entry name" value="aa-tRNA-synt_IIb"/>
</dbReference>
<dbReference type="InterPro" id="IPR006195">
    <property type="entry name" value="aa-tRNA-synth_II"/>
</dbReference>
<dbReference type="InterPro" id="IPR045864">
    <property type="entry name" value="aa-tRNA-synth_II/BPL/LPL"/>
</dbReference>
<dbReference type="InterPro" id="IPR004154">
    <property type="entry name" value="Anticodon-bd"/>
</dbReference>
<dbReference type="InterPro" id="IPR036621">
    <property type="entry name" value="Anticodon-bd_dom_sf"/>
</dbReference>
<dbReference type="InterPro" id="IPR004095">
    <property type="entry name" value="TGS"/>
</dbReference>
<dbReference type="InterPro" id="IPR002320">
    <property type="entry name" value="Thr-tRNA-ligase_IIa"/>
</dbReference>
<dbReference type="InterPro" id="IPR018163">
    <property type="entry name" value="Thr/Ala-tRNA-synth_IIc_edit"/>
</dbReference>
<dbReference type="InterPro" id="IPR047246">
    <property type="entry name" value="ThrRS_anticodon"/>
</dbReference>
<dbReference type="InterPro" id="IPR033728">
    <property type="entry name" value="ThrRS_core"/>
</dbReference>
<dbReference type="InterPro" id="IPR012947">
    <property type="entry name" value="tRNA_SAD"/>
</dbReference>
<dbReference type="NCBIfam" id="TIGR00418">
    <property type="entry name" value="thrS"/>
    <property type="match status" value="1"/>
</dbReference>
<dbReference type="PANTHER" id="PTHR11451:SF44">
    <property type="entry name" value="THREONINE--TRNA LIGASE, CHLOROPLASTIC_MITOCHONDRIAL 2"/>
    <property type="match status" value="1"/>
</dbReference>
<dbReference type="PANTHER" id="PTHR11451">
    <property type="entry name" value="THREONINE-TRNA LIGASE"/>
    <property type="match status" value="1"/>
</dbReference>
<dbReference type="Pfam" id="PF03129">
    <property type="entry name" value="HGTP_anticodon"/>
    <property type="match status" value="1"/>
</dbReference>
<dbReference type="Pfam" id="PF00587">
    <property type="entry name" value="tRNA-synt_2b"/>
    <property type="match status" value="1"/>
</dbReference>
<dbReference type="Pfam" id="PF07973">
    <property type="entry name" value="tRNA_SAD"/>
    <property type="match status" value="1"/>
</dbReference>
<dbReference type="PRINTS" id="PR01047">
    <property type="entry name" value="TRNASYNTHTHR"/>
</dbReference>
<dbReference type="SMART" id="SM00863">
    <property type="entry name" value="tRNA_SAD"/>
    <property type="match status" value="1"/>
</dbReference>
<dbReference type="SUPFAM" id="SSF52954">
    <property type="entry name" value="Class II aaRS ABD-related"/>
    <property type="match status" value="1"/>
</dbReference>
<dbReference type="SUPFAM" id="SSF55681">
    <property type="entry name" value="Class II aaRS and biotin synthetases"/>
    <property type="match status" value="1"/>
</dbReference>
<dbReference type="SUPFAM" id="SSF55186">
    <property type="entry name" value="ThrRS/AlaRS common domain"/>
    <property type="match status" value="1"/>
</dbReference>
<dbReference type="PROSITE" id="PS50862">
    <property type="entry name" value="AA_TRNA_LIGASE_II"/>
    <property type="match status" value="1"/>
</dbReference>
<dbReference type="PROSITE" id="PS51880">
    <property type="entry name" value="TGS"/>
    <property type="match status" value="1"/>
</dbReference>
<accession>Q8FPJ3</accession>
<name>SYT_COREF</name>
<organism>
    <name type="scientific">Corynebacterium efficiens (strain DSM 44549 / YS-314 / AJ 12310 / JCM 11189 / NBRC 100395)</name>
    <dbReference type="NCBI Taxonomy" id="196164"/>
    <lineage>
        <taxon>Bacteria</taxon>
        <taxon>Bacillati</taxon>
        <taxon>Actinomycetota</taxon>
        <taxon>Actinomycetes</taxon>
        <taxon>Mycobacteriales</taxon>
        <taxon>Corynebacteriaceae</taxon>
        <taxon>Corynebacterium</taxon>
    </lineage>
</organism>